<proteinExistence type="inferred from homology"/>
<comment type="function">
    <text evidence="1">Protein-histidine N-methyltransferase that specifically mediates 3-methylhistidine (tele-methylhistidine) methylation of actin at 'His-73'. Histidine methylation of actin is required for smooth muscle contraction of the laboring uterus during delivery. Does not have protein-lysine N-methyltransferase activity and probably only catalyzes histidine methylation of actin.</text>
</comment>
<comment type="catalytic activity">
    <reaction evidence="1">
        <text>L-histidyl-[protein] + S-adenosyl-L-methionine = N(tele)-methyl-L-histidyl-[protein] + S-adenosyl-L-homocysteine + H(+)</text>
        <dbReference type="Rhea" id="RHEA:19369"/>
        <dbReference type="Rhea" id="RHEA-COMP:9745"/>
        <dbReference type="Rhea" id="RHEA-COMP:11600"/>
        <dbReference type="ChEBI" id="CHEBI:15378"/>
        <dbReference type="ChEBI" id="CHEBI:16367"/>
        <dbReference type="ChEBI" id="CHEBI:29979"/>
        <dbReference type="ChEBI" id="CHEBI:57856"/>
        <dbReference type="ChEBI" id="CHEBI:59789"/>
        <dbReference type="EC" id="2.1.1.85"/>
    </reaction>
</comment>
<comment type="subunit">
    <text evidence="2">Interacts with MYOD1.</text>
</comment>
<comment type="subcellular location">
    <subcellularLocation>
        <location evidence="1">Cytoplasm</location>
    </subcellularLocation>
    <subcellularLocation>
        <location evidence="1">Nucleus</location>
    </subcellularLocation>
    <text evidence="1">Localizes mainly in the cytoplasm.</text>
</comment>
<comment type="domain">
    <text evidence="1">The SET domain specifically recognizes and binds actin, suggesting that it does not accommodate substrates diverging from actin.</text>
</comment>
<comment type="PTM">
    <text evidence="1">Phosphorylated by GSK3B, which is required for recognition by the SCF(FBXW7) complex and subsequent degradation.</text>
</comment>
<comment type="PTM">
    <text evidence="1">Ubiquitinated by the SCF(FBXW7) complex following phosphorylation by GSK3B, leading to its degradation by the proteasome.</text>
</comment>
<comment type="similarity">
    <text evidence="4">Belongs to the class V-like SAM-binding methyltransferase superfamily. SETD3 actin-histidine methyltransferase family.</text>
</comment>
<comment type="sequence caution" evidence="6">
    <conflict type="erroneous initiation">
        <sequence resource="EMBL-CDS" id="ACA57918"/>
    </conflict>
    <text>Extended N-terminus.</text>
</comment>
<protein>
    <recommendedName>
        <fullName evidence="1">Actin-histidine N-methyltransferase</fullName>
        <ecNumber evidence="1">2.1.1.85</ecNumber>
    </recommendedName>
    <alternativeName>
        <fullName evidence="6">Protein-L-histidine N-tele-methyltransferase</fullName>
    </alternativeName>
    <alternativeName>
        <fullName evidence="6">SET domain-containing protein 3</fullName>
    </alternativeName>
</protein>
<sequence length="595" mass="67463">MGKKSRVKTQKSGTGATATVSPKEILNLTSELLQKCSSPAPGPGKEWEEYVQIRTLVEKIRKKQKGLSVTFDGKREDYFPDLMKWASENGASVEGFEMVNFKEEGFGLRATRDIKAEELFLWVPRKLLMTVESAKNSVLGPLYSQDRILQAMGNIALAFHLLCERASPNSFWQPYIQTLPSEYDTPLYFEEDEVRYLQSTQAIHDVFSQYKNTARQYAYFYKVIQTHPHANKLPLKDSFTYEDYRWAVSSVMTRQNQIPTEDGSRVTLALIPLWDMCNHTNGLITTGYNLEDDRCECVALQDFRAGEQIYIFYGTRSNAEFVIHSGFFFDNNSHDRVKIKLGVSKSDRLYAMKAEVLARAGIPTSSVFALHFTEPPISAQLLAFLRVFCMTEEELKEHLLGDNAIDRIFTLGNSEFPVSWDNEVKLWTFLEDRASLLLKTYKTTIEEDKSVLKNQDLSVRAKMAIKLRLGEKEILEKAVKSAAGNREYYRQQMEEKAPLPKYEESNLGLLESSVGDSRLPLVLRNLEEEAGVQDALNIREAISKAKTTENGLVNGENSIPNGTRSENENLNQEGSKRAVEDAKGSSSDSTDEVKE</sequence>
<dbReference type="EC" id="2.1.1.85" evidence="1"/>
<dbReference type="EMBL" id="DP000637">
    <property type="protein sequence ID" value="ACA57918.1"/>
    <property type="status" value="ALT_INIT"/>
    <property type="molecule type" value="Genomic_DNA"/>
</dbReference>
<dbReference type="SMR" id="B1MTJ4"/>
<dbReference type="GO" id="GO:0005737">
    <property type="term" value="C:cytoplasm"/>
    <property type="evidence" value="ECO:0000250"/>
    <property type="project" value="UniProtKB"/>
</dbReference>
<dbReference type="GO" id="GO:0005634">
    <property type="term" value="C:nucleus"/>
    <property type="evidence" value="ECO:0007669"/>
    <property type="project" value="UniProtKB-SubCell"/>
</dbReference>
<dbReference type="GO" id="GO:0003779">
    <property type="term" value="F:actin binding"/>
    <property type="evidence" value="ECO:0007669"/>
    <property type="project" value="UniProtKB-KW"/>
</dbReference>
<dbReference type="GO" id="GO:0046975">
    <property type="term" value="F:histone H3K36 methyltransferase activity"/>
    <property type="evidence" value="ECO:0000250"/>
    <property type="project" value="UniProtKB"/>
</dbReference>
<dbReference type="GO" id="GO:0018064">
    <property type="term" value="F:protein-L-histidine N-tele-methyltransferase activity"/>
    <property type="evidence" value="ECO:0000250"/>
    <property type="project" value="UniProtKB"/>
</dbReference>
<dbReference type="GO" id="GO:0003713">
    <property type="term" value="F:transcription coactivator activity"/>
    <property type="evidence" value="ECO:0000250"/>
    <property type="project" value="UniProtKB"/>
</dbReference>
<dbReference type="GO" id="GO:0030047">
    <property type="term" value="P:actin modification"/>
    <property type="evidence" value="ECO:0000250"/>
    <property type="project" value="UniProtKB"/>
</dbReference>
<dbReference type="GO" id="GO:0018021">
    <property type="term" value="P:peptidyl-histidine methylation"/>
    <property type="evidence" value="ECO:0000250"/>
    <property type="project" value="UniProtKB"/>
</dbReference>
<dbReference type="GO" id="GO:0045893">
    <property type="term" value="P:positive regulation of DNA-templated transcription"/>
    <property type="evidence" value="ECO:0000250"/>
    <property type="project" value="UniProtKB"/>
</dbReference>
<dbReference type="GO" id="GO:0070472">
    <property type="term" value="P:regulation of uterine smooth muscle contraction"/>
    <property type="evidence" value="ECO:0000250"/>
    <property type="project" value="UniProtKB"/>
</dbReference>
<dbReference type="CDD" id="cd19176">
    <property type="entry name" value="SET_SETD3"/>
    <property type="match status" value="1"/>
</dbReference>
<dbReference type="FunFam" id="3.90.1410.10:FF:000001">
    <property type="entry name" value="histone-lysine N-methyltransferase setd3 isoform X1"/>
    <property type="match status" value="1"/>
</dbReference>
<dbReference type="FunFam" id="3.90.1420.10:FF:000001">
    <property type="entry name" value="histone-lysine N-methyltransferase setd3 isoform X1"/>
    <property type="match status" value="1"/>
</dbReference>
<dbReference type="Gene3D" id="3.90.1420.10">
    <property type="entry name" value="Rubisco LSMT, substrate-binding domain"/>
    <property type="match status" value="1"/>
</dbReference>
<dbReference type="Gene3D" id="3.90.1410.10">
    <property type="entry name" value="set domain protein methyltransferase, domain 1"/>
    <property type="match status" value="1"/>
</dbReference>
<dbReference type="InterPro" id="IPR015353">
    <property type="entry name" value="Rubisco_LSMT_subst-bd"/>
</dbReference>
<dbReference type="InterPro" id="IPR036464">
    <property type="entry name" value="Rubisco_LSMT_subst-bd_sf"/>
</dbReference>
<dbReference type="InterPro" id="IPR001214">
    <property type="entry name" value="SET_dom"/>
</dbReference>
<dbReference type="InterPro" id="IPR046341">
    <property type="entry name" value="SET_dom_sf"/>
</dbReference>
<dbReference type="InterPro" id="IPR025785">
    <property type="entry name" value="SETD3"/>
</dbReference>
<dbReference type="InterPro" id="IPR044428">
    <property type="entry name" value="SETD3_SET"/>
</dbReference>
<dbReference type="InterPro" id="IPR050600">
    <property type="entry name" value="SETD3_SETD6_MTase"/>
</dbReference>
<dbReference type="PANTHER" id="PTHR13271:SF47">
    <property type="entry name" value="ACTIN-HISTIDINE N-METHYLTRANSFERASE"/>
    <property type="match status" value="1"/>
</dbReference>
<dbReference type="PANTHER" id="PTHR13271">
    <property type="entry name" value="UNCHARACTERIZED PUTATIVE METHYLTRANSFERASE"/>
    <property type="match status" value="1"/>
</dbReference>
<dbReference type="Pfam" id="PF09273">
    <property type="entry name" value="Rubis-subs-bind"/>
    <property type="match status" value="1"/>
</dbReference>
<dbReference type="Pfam" id="PF00856">
    <property type="entry name" value="SET"/>
    <property type="match status" value="1"/>
</dbReference>
<dbReference type="SUPFAM" id="SSF81822">
    <property type="entry name" value="RuBisCo LSMT C-terminal, substrate-binding domain"/>
    <property type="match status" value="1"/>
</dbReference>
<dbReference type="SUPFAM" id="SSF82199">
    <property type="entry name" value="SET domain"/>
    <property type="match status" value="1"/>
</dbReference>
<dbReference type="PROSITE" id="PS51565">
    <property type="entry name" value="SAM_MT85_SETD3"/>
    <property type="match status" value="1"/>
</dbReference>
<dbReference type="PROSITE" id="PS50280">
    <property type="entry name" value="SET"/>
    <property type="match status" value="1"/>
</dbReference>
<reference key="1">
    <citation type="submission" date="2008-03" db="EMBL/GenBank/DDBJ databases">
        <title>NISC comparative sequencing initiative.</title>
        <authorList>
            <person name="Antonellis A."/>
            <person name="Ayele K."/>
            <person name="Benjamin B."/>
            <person name="Blakesley R.W."/>
            <person name="Boakye A."/>
            <person name="Bouffard G.G."/>
            <person name="Brinkley C."/>
            <person name="Brooks S."/>
            <person name="Chu G."/>
            <person name="Coleman H."/>
            <person name="Engle J."/>
            <person name="Gestole M."/>
            <person name="Greene A."/>
            <person name="Guan X."/>
            <person name="Gupta J."/>
            <person name="Haghighi P."/>
            <person name="Han J."/>
            <person name="Hansen N."/>
            <person name="Ho S.-L."/>
            <person name="Hu P."/>
            <person name="Hunter G."/>
            <person name="Hurle B."/>
            <person name="Idol J.R."/>
            <person name="Kwong P."/>
            <person name="Laric P."/>
            <person name="Larson S."/>
            <person name="Lee-Lin S.-Q."/>
            <person name="Legaspi R."/>
            <person name="Madden M."/>
            <person name="Maduro Q.L."/>
            <person name="Maduro V.B."/>
            <person name="Margulies E.H."/>
            <person name="Masiello C."/>
            <person name="Maskeri B."/>
            <person name="McDowell J."/>
            <person name="Mojidi H.A."/>
            <person name="Mullikin J.C."/>
            <person name="Oestreicher J.S."/>
            <person name="Park M."/>
            <person name="Portnoy M.E."/>
            <person name="Prasad A."/>
            <person name="Puri O."/>
            <person name="Reddix-Dugue N."/>
            <person name="Schandler K."/>
            <person name="Schueler M.G."/>
            <person name="Sison C."/>
            <person name="Stantripop S."/>
            <person name="Stephen E."/>
            <person name="Taye A."/>
            <person name="Thomas J.W."/>
            <person name="Thomas P.J."/>
            <person name="Tsipouri V."/>
            <person name="Ung L."/>
            <person name="Vogt J.L."/>
            <person name="Wetherby K.D."/>
            <person name="Young A."/>
            <person name="Green E.D."/>
        </authorList>
    </citation>
    <scope>NUCLEOTIDE SEQUENCE [LARGE SCALE GENOMIC DNA]</scope>
</reference>
<gene>
    <name evidence="1" type="primary">SETD3</name>
</gene>
<accession>B1MTJ4</accession>
<evidence type="ECO:0000250" key="1">
    <source>
        <dbReference type="UniProtKB" id="Q86TU7"/>
    </source>
</evidence>
<evidence type="ECO:0000250" key="2">
    <source>
        <dbReference type="UniProtKB" id="Q91WC0"/>
    </source>
</evidence>
<evidence type="ECO:0000255" key="3">
    <source>
        <dbReference type="PROSITE-ProRule" id="PRU00190"/>
    </source>
</evidence>
<evidence type="ECO:0000255" key="4">
    <source>
        <dbReference type="PROSITE-ProRule" id="PRU00898"/>
    </source>
</evidence>
<evidence type="ECO:0000256" key="5">
    <source>
        <dbReference type="SAM" id="MobiDB-lite"/>
    </source>
</evidence>
<evidence type="ECO:0000305" key="6"/>
<organism>
    <name type="scientific">Plecturocebus moloch</name>
    <name type="common">Dusky titi monkey</name>
    <name type="synonym">Callicebus moloch</name>
    <dbReference type="NCBI Taxonomy" id="9523"/>
    <lineage>
        <taxon>Eukaryota</taxon>
        <taxon>Metazoa</taxon>
        <taxon>Chordata</taxon>
        <taxon>Craniata</taxon>
        <taxon>Vertebrata</taxon>
        <taxon>Euteleostomi</taxon>
        <taxon>Mammalia</taxon>
        <taxon>Eutheria</taxon>
        <taxon>Euarchontoglires</taxon>
        <taxon>Primates</taxon>
        <taxon>Haplorrhini</taxon>
        <taxon>Platyrrhini</taxon>
        <taxon>Pitheciidae</taxon>
        <taxon>Callicebinae</taxon>
        <taxon>Plecturocebus</taxon>
    </lineage>
</organism>
<name>SETD3_PLEMO</name>
<feature type="chain" id="PRO_0000408336" description="Actin-histidine N-methyltransferase">
    <location>
        <begin position="1"/>
        <end position="595"/>
    </location>
</feature>
<feature type="domain" description="SET" evidence="3">
    <location>
        <begin position="94"/>
        <end position="314"/>
    </location>
</feature>
<feature type="region of interest" description="Disordered" evidence="5">
    <location>
        <begin position="1"/>
        <end position="22"/>
    </location>
</feature>
<feature type="region of interest" description="Disordered" evidence="5">
    <location>
        <begin position="549"/>
        <end position="595"/>
    </location>
</feature>
<feature type="compositionally biased region" description="Polar residues" evidence="5">
    <location>
        <begin position="10"/>
        <end position="20"/>
    </location>
</feature>
<feature type="compositionally biased region" description="Polar residues" evidence="5">
    <location>
        <begin position="549"/>
        <end position="573"/>
    </location>
</feature>
<feature type="compositionally biased region" description="Basic and acidic residues" evidence="5">
    <location>
        <begin position="574"/>
        <end position="583"/>
    </location>
</feature>
<feature type="binding site" evidence="1">
    <location>
        <position position="75"/>
    </location>
    <ligand>
        <name>S-adenosyl-L-methionine</name>
        <dbReference type="ChEBI" id="CHEBI:59789"/>
    </ligand>
</feature>
<feature type="binding site" evidence="1">
    <location>
        <begin position="104"/>
        <end position="106"/>
    </location>
    <ligand>
        <name>S-adenosyl-L-methionine</name>
        <dbReference type="ChEBI" id="CHEBI:59789"/>
    </ligand>
</feature>
<feature type="binding site" evidence="1">
    <location>
        <position position="254"/>
    </location>
    <ligand>
        <name>S-adenosyl-L-methionine</name>
        <dbReference type="ChEBI" id="CHEBI:59789"/>
    </ligand>
</feature>
<feature type="binding site" evidence="1">
    <location>
        <begin position="275"/>
        <end position="279"/>
    </location>
    <ligand>
        <name>S-adenosyl-L-methionine</name>
        <dbReference type="ChEBI" id="CHEBI:59789"/>
    </ligand>
</feature>
<feature type="binding site" evidence="1">
    <location>
        <begin position="325"/>
        <end position="327"/>
    </location>
    <ligand>
        <name>S-adenosyl-L-methionine</name>
        <dbReference type="ChEBI" id="CHEBI:59789"/>
    </ligand>
</feature>
<feature type="modified residue" description="Phosphoserine" evidence="1">
    <location>
        <position position="513"/>
    </location>
</feature>
<keyword id="KW-0009">Actin-binding</keyword>
<keyword id="KW-0963">Cytoplasm</keyword>
<keyword id="KW-0489">Methyltransferase</keyword>
<keyword id="KW-0539">Nucleus</keyword>
<keyword id="KW-0597">Phosphoprotein</keyword>
<keyword id="KW-0949">S-adenosyl-L-methionine</keyword>
<keyword id="KW-0808">Transferase</keyword>
<keyword id="KW-0832">Ubl conjugation</keyword>